<proteinExistence type="inferred from homology"/>
<reference key="1">
    <citation type="journal article" date="2004" name="Proc. Natl. Acad. Sci. U.S.A.">
        <title>The louse-borne human pathogen Bartonella quintana is a genomic derivative of the zoonotic agent Bartonella henselae.</title>
        <authorList>
            <person name="Alsmark U.C.M."/>
            <person name="Frank A.C."/>
            <person name="Karlberg E.O."/>
            <person name="Legault B.-A."/>
            <person name="Ardell D.H."/>
            <person name="Canbaeck B."/>
            <person name="Eriksson A.-S."/>
            <person name="Naeslund A.K."/>
            <person name="Handley S.A."/>
            <person name="Huvet M."/>
            <person name="La Scola B."/>
            <person name="Holmberg M."/>
            <person name="Andersson S.G.E."/>
        </authorList>
    </citation>
    <scope>NUCLEOTIDE SEQUENCE [LARGE SCALE GENOMIC DNA]</scope>
    <source>
        <strain>ATCC 49882 / DSM 28221 / CCUG 30454 / Houston 1</strain>
    </source>
</reference>
<sequence length="156" mass="17779">MSRRHKAEKREINPDPKFGDLVITKFMNAIMFDGKKSVAERIVYGALDVVESKVKSDPVALFHRALENVAPHIEVRSRRVGGATYQVPIDVRPDRRQALAIRWLISAARGRNEATMIDRLSGELMDAANNRGSAVKKREDVHRMAEANRAFSHYRW</sequence>
<comment type="function">
    <text evidence="1">One of the primary rRNA binding proteins, it binds directly to 16S rRNA where it nucleates assembly of the head domain of the 30S subunit. Is located at the subunit interface close to the decoding center, probably blocks exit of the E-site tRNA.</text>
</comment>
<comment type="subunit">
    <text evidence="1">Part of the 30S ribosomal subunit. Contacts proteins S9 and S11.</text>
</comment>
<comment type="similarity">
    <text evidence="1">Belongs to the universal ribosomal protein uS7 family.</text>
</comment>
<accession>Q6G2W1</accession>
<name>RS7_BARHE</name>
<feature type="chain" id="PRO_0000124221" description="Small ribosomal subunit protein uS7">
    <location>
        <begin position="1"/>
        <end position="156"/>
    </location>
</feature>
<gene>
    <name evidence="1" type="primary">rpsG</name>
    <name type="ordered locus">BH10550</name>
</gene>
<evidence type="ECO:0000255" key="1">
    <source>
        <dbReference type="HAMAP-Rule" id="MF_00480"/>
    </source>
</evidence>
<evidence type="ECO:0000305" key="2"/>
<organism>
    <name type="scientific">Bartonella henselae (strain ATCC 49882 / DSM 28221 / CCUG 30454 / Houston 1)</name>
    <name type="common">Rochalimaea henselae</name>
    <dbReference type="NCBI Taxonomy" id="283166"/>
    <lineage>
        <taxon>Bacteria</taxon>
        <taxon>Pseudomonadati</taxon>
        <taxon>Pseudomonadota</taxon>
        <taxon>Alphaproteobacteria</taxon>
        <taxon>Hyphomicrobiales</taxon>
        <taxon>Bartonellaceae</taxon>
        <taxon>Bartonella</taxon>
    </lineage>
</organism>
<protein>
    <recommendedName>
        <fullName evidence="1">Small ribosomal subunit protein uS7</fullName>
    </recommendedName>
    <alternativeName>
        <fullName evidence="2">30S ribosomal protein S7</fullName>
    </alternativeName>
</protein>
<dbReference type="EMBL" id="BX897699">
    <property type="protein sequence ID" value="CAF27846.1"/>
    <property type="molecule type" value="Genomic_DNA"/>
</dbReference>
<dbReference type="RefSeq" id="WP_011180916.1">
    <property type="nucleotide sequence ID" value="NZ_LRIJ02000001.1"/>
</dbReference>
<dbReference type="SMR" id="Q6G2W1"/>
<dbReference type="PaxDb" id="283166-BH10550"/>
<dbReference type="EnsemblBacteria" id="CAF27846">
    <property type="protein sequence ID" value="CAF27846"/>
    <property type="gene ID" value="BH10550"/>
</dbReference>
<dbReference type="GeneID" id="92985674"/>
<dbReference type="KEGG" id="bhe:BH10550"/>
<dbReference type="eggNOG" id="COG0049">
    <property type="taxonomic scope" value="Bacteria"/>
</dbReference>
<dbReference type="OrthoDB" id="9807653at2"/>
<dbReference type="Proteomes" id="UP000000421">
    <property type="component" value="Chromosome"/>
</dbReference>
<dbReference type="GO" id="GO:0015935">
    <property type="term" value="C:small ribosomal subunit"/>
    <property type="evidence" value="ECO:0007669"/>
    <property type="project" value="InterPro"/>
</dbReference>
<dbReference type="GO" id="GO:0019843">
    <property type="term" value="F:rRNA binding"/>
    <property type="evidence" value="ECO:0007669"/>
    <property type="project" value="UniProtKB-UniRule"/>
</dbReference>
<dbReference type="GO" id="GO:0003735">
    <property type="term" value="F:structural constituent of ribosome"/>
    <property type="evidence" value="ECO:0007669"/>
    <property type="project" value="InterPro"/>
</dbReference>
<dbReference type="GO" id="GO:0000049">
    <property type="term" value="F:tRNA binding"/>
    <property type="evidence" value="ECO:0007669"/>
    <property type="project" value="UniProtKB-UniRule"/>
</dbReference>
<dbReference type="GO" id="GO:0006412">
    <property type="term" value="P:translation"/>
    <property type="evidence" value="ECO:0007669"/>
    <property type="project" value="UniProtKB-UniRule"/>
</dbReference>
<dbReference type="CDD" id="cd14869">
    <property type="entry name" value="uS7_Bacteria"/>
    <property type="match status" value="1"/>
</dbReference>
<dbReference type="FunFam" id="1.10.455.10:FF:000001">
    <property type="entry name" value="30S ribosomal protein S7"/>
    <property type="match status" value="1"/>
</dbReference>
<dbReference type="Gene3D" id="1.10.455.10">
    <property type="entry name" value="Ribosomal protein S7 domain"/>
    <property type="match status" value="1"/>
</dbReference>
<dbReference type="HAMAP" id="MF_00480_B">
    <property type="entry name" value="Ribosomal_uS7_B"/>
    <property type="match status" value="1"/>
</dbReference>
<dbReference type="InterPro" id="IPR000235">
    <property type="entry name" value="Ribosomal_uS7"/>
</dbReference>
<dbReference type="InterPro" id="IPR005717">
    <property type="entry name" value="Ribosomal_uS7_bac/org-type"/>
</dbReference>
<dbReference type="InterPro" id="IPR020606">
    <property type="entry name" value="Ribosomal_uS7_CS"/>
</dbReference>
<dbReference type="InterPro" id="IPR023798">
    <property type="entry name" value="Ribosomal_uS7_dom"/>
</dbReference>
<dbReference type="InterPro" id="IPR036823">
    <property type="entry name" value="Ribosomal_uS7_dom_sf"/>
</dbReference>
<dbReference type="NCBIfam" id="TIGR01029">
    <property type="entry name" value="rpsG_bact"/>
    <property type="match status" value="1"/>
</dbReference>
<dbReference type="PANTHER" id="PTHR11205">
    <property type="entry name" value="RIBOSOMAL PROTEIN S7"/>
    <property type="match status" value="1"/>
</dbReference>
<dbReference type="Pfam" id="PF00177">
    <property type="entry name" value="Ribosomal_S7"/>
    <property type="match status" value="1"/>
</dbReference>
<dbReference type="PIRSF" id="PIRSF002122">
    <property type="entry name" value="RPS7p_RPS7a_RPS5e_RPS7o"/>
    <property type="match status" value="1"/>
</dbReference>
<dbReference type="SUPFAM" id="SSF47973">
    <property type="entry name" value="Ribosomal protein S7"/>
    <property type="match status" value="1"/>
</dbReference>
<dbReference type="PROSITE" id="PS00052">
    <property type="entry name" value="RIBOSOMAL_S7"/>
    <property type="match status" value="1"/>
</dbReference>
<keyword id="KW-0687">Ribonucleoprotein</keyword>
<keyword id="KW-0689">Ribosomal protein</keyword>
<keyword id="KW-0694">RNA-binding</keyword>
<keyword id="KW-0699">rRNA-binding</keyword>
<keyword id="KW-0820">tRNA-binding</keyword>